<feature type="chain" id="PRO_0000309836" description="Lysophospholipid transporter LplT">
    <location>
        <begin position="1"/>
        <end position="396"/>
    </location>
</feature>
<feature type="topological domain" description="Periplasmic" evidence="1">
    <location>
        <begin position="1"/>
        <end position="17"/>
    </location>
</feature>
<feature type="transmembrane region" description="Helical" evidence="1">
    <location>
        <begin position="18"/>
        <end position="38"/>
    </location>
</feature>
<feature type="topological domain" description="Cytoplasmic" evidence="1">
    <location>
        <begin position="39"/>
        <end position="52"/>
    </location>
</feature>
<feature type="transmembrane region" description="Helical" evidence="1">
    <location>
        <begin position="53"/>
        <end position="73"/>
    </location>
</feature>
<feature type="topological domain" description="Periplasmic" evidence="1">
    <location>
        <begin position="74"/>
        <end position="90"/>
    </location>
</feature>
<feature type="transmembrane region" description="Helical" evidence="1">
    <location>
        <begin position="91"/>
        <end position="111"/>
    </location>
</feature>
<feature type="topological domain" description="Cytoplasmic" evidence="1">
    <location>
        <begin position="112"/>
        <end position="144"/>
    </location>
</feature>
<feature type="transmembrane region" description="Helical" evidence="1">
    <location>
        <begin position="145"/>
        <end position="165"/>
    </location>
</feature>
<feature type="topological domain" description="Periplasmic" evidence="1">
    <location>
        <position position="166"/>
    </location>
</feature>
<feature type="transmembrane region" description="Helical" evidence="1">
    <location>
        <begin position="167"/>
        <end position="187"/>
    </location>
</feature>
<feature type="topological domain" description="Cytoplasmic" evidence="1">
    <location>
        <begin position="188"/>
        <end position="225"/>
    </location>
</feature>
<feature type="transmembrane region" description="Helical" evidence="1">
    <location>
        <begin position="226"/>
        <end position="246"/>
    </location>
</feature>
<feature type="topological domain" description="Periplasmic" evidence="1">
    <location>
        <begin position="247"/>
        <end position="255"/>
    </location>
</feature>
<feature type="transmembrane region" description="Helical" evidence="1">
    <location>
        <begin position="256"/>
        <end position="276"/>
    </location>
</feature>
<feature type="topological domain" description="Cytoplasmic" evidence="1">
    <location>
        <begin position="277"/>
        <end position="279"/>
    </location>
</feature>
<feature type="transmembrane region" description="Helical" evidence="1">
    <location>
        <begin position="280"/>
        <end position="300"/>
    </location>
</feature>
<feature type="topological domain" description="Periplasmic" evidence="1">
    <location>
        <begin position="301"/>
        <end position="303"/>
    </location>
</feature>
<feature type="transmembrane region" description="Helical" evidence="1">
    <location>
        <begin position="304"/>
        <end position="324"/>
    </location>
</feature>
<feature type="topological domain" description="Cytoplasmic" evidence="1">
    <location>
        <begin position="325"/>
        <end position="342"/>
    </location>
</feature>
<feature type="transmembrane region" description="Helical" evidence="1">
    <location>
        <begin position="343"/>
        <end position="363"/>
    </location>
</feature>
<feature type="topological domain" description="Periplasmic" evidence="1">
    <location>
        <begin position="364"/>
        <end position="365"/>
    </location>
</feature>
<feature type="transmembrane region" description="Helical" evidence="1">
    <location>
        <begin position="366"/>
        <end position="386"/>
    </location>
</feature>
<feature type="topological domain" description="Cytoplasmic" evidence="1">
    <location>
        <begin position="387"/>
        <end position="396"/>
    </location>
</feature>
<feature type="sequence conflict" description="In Ref. 2; AAP18157." evidence="2" ref="2">
    <original>Y</original>
    <variation>C</variation>
    <location>
        <position position="116"/>
    </location>
</feature>
<accession>Q83QB9</accession>
<accession>Q7UBR4</accession>
<sequence>MSESVHTNTSLWSKGMKAVIVAQFLSAFGDNALLFATLALLKAQFYPEWSQPILQMVFVGAYILLAPFVGQVADSFAKGRVMMFANGLKLLGAASICFGINPFLGYTLVGVGAAAYSPAKYGILGELTTGSKLVKANGLMEASAIAAILLGSVAGGVLADWHVLVALAACALAYGGAVVANIYIPKLAARPGQSWNLINMTRSFLNACTSLWCNGETRFSLVGTSLFWGAGVTLRFLLVLWVPVALGITDNATPTYLNAMVAIGIVVGAGAAAKLVTLETVSRCMPAGILIGVVVPIFSLQHELLPAYALLMLIGVLGGFFVVPLNALLQERGKKSVGAGNAIAVQNLGENSAMLLMLGIYSLAVMVGIPVVPIGIGFGALFALAITALWIWQRRH</sequence>
<gene>
    <name evidence="1" type="primary">lplT</name>
    <name type="ordered locus">SF2845</name>
    <name type="ordered locus">S3043</name>
</gene>
<name>LPLT_SHIFL</name>
<proteinExistence type="inferred from homology"/>
<keyword id="KW-0997">Cell inner membrane</keyword>
<keyword id="KW-1003">Cell membrane</keyword>
<keyword id="KW-0445">Lipid transport</keyword>
<keyword id="KW-0472">Membrane</keyword>
<keyword id="KW-1185">Reference proteome</keyword>
<keyword id="KW-0812">Transmembrane</keyword>
<keyword id="KW-1133">Transmembrane helix</keyword>
<keyword id="KW-0813">Transport</keyword>
<protein>
    <recommendedName>
        <fullName evidence="1">Lysophospholipid transporter LplT</fullName>
    </recommendedName>
</protein>
<comment type="function">
    <text evidence="1">Catalyzes the facilitated diffusion of 2-acyl-glycero-3-phosphoethanolamine (2-acyl-GPE) into the cell.</text>
</comment>
<comment type="subcellular location">
    <subcellularLocation>
        <location evidence="1">Cell inner membrane</location>
        <topology evidence="1">Multi-pass membrane protein</topology>
    </subcellularLocation>
</comment>
<comment type="similarity">
    <text evidence="1">Belongs to the major facilitator superfamily. LplT (TC 2.A.1.42) family.</text>
</comment>
<reference key="1">
    <citation type="journal article" date="2002" name="Nucleic Acids Res.">
        <title>Genome sequence of Shigella flexneri 2a: insights into pathogenicity through comparison with genomes of Escherichia coli K12 and O157.</title>
        <authorList>
            <person name="Jin Q."/>
            <person name="Yuan Z."/>
            <person name="Xu J."/>
            <person name="Wang Y."/>
            <person name="Shen Y."/>
            <person name="Lu W."/>
            <person name="Wang J."/>
            <person name="Liu H."/>
            <person name="Yang J."/>
            <person name="Yang F."/>
            <person name="Zhang X."/>
            <person name="Zhang J."/>
            <person name="Yang G."/>
            <person name="Wu H."/>
            <person name="Qu D."/>
            <person name="Dong J."/>
            <person name="Sun L."/>
            <person name="Xue Y."/>
            <person name="Zhao A."/>
            <person name="Gao Y."/>
            <person name="Zhu J."/>
            <person name="Kan B."/>
            <person name="Ding K."/>
            <person name="Chen S."/>
            <person name="Cheng H."/>
            <person name="Yao Z."/>
            <person name="He B."/>
            <person name="Chen R."/>
            <person name="Ma D."/>
            <person name="Qiang B."/>
            <person name="Wen Y."/>
            <person name="Hou Y."/>
            <person name="Yu J."/>
        </authorList>
    </citation>
    <scope>NUCLEOTIDE SEQUENCE [LARGE SCALE GENOMIC DNA]</scope>
    <source>
        <strain>301 / Serotype 2a</strain>
    </source>
</reference>
<reference key="2">
    <citation type="journal article" date="2003" name="Infect. Immun.">
        <title>Complete genome sequence and comparative genomics of Shigella flexneri serotype 2a strain 2457T.</title>
        <authorList>
            <person name="Wei J."/>
            <person name="Goldberg M.B."/>
            <person name="Burland V."/>
            <person name="Venkatesan M.M."/>
            <person name="Deng W."/>
            <person name="Fournier G."/>
            <person name="Mayhew G.F."/>
            <person name="Plunkett G. III"/>
            <person name="Rose D.J."/>
            <person name="Darling A."/>
            <person name="Mau B."/>
            <person name="Perna N.T."/>
            <person name="Payne S.M."/>
            <person name="Runyen-Janecky L.J."/>
            <person name="Zhou S."/>
            <person name="Schwartz D.C."/>
            <person name="Blattner F.R."/>
        </authorList>
    </citation>
    <scope>NUCLEOTIDE SEQUENCE [LARGE SCALE GENOMIC DNA]</scope>
    <source>
        <strain>ATCC 700930 / 2457T / Serotype 2a</strain>
    </source>
</reference>
<organism>
    <name type="scientific">Shigella flexneri</name>
    <dbReference type="NCBI Taxonomy" id="623"/>
    <lineage>
        <taxon>Bacteria</taxon>
        <taxon>Pseudomonadati</taxon>
        <taxon>Pseudomonadota</taxon>
        <taxon>Gammaproteobacteria</taxon>
        <taxon>Enterobacterales</taxon>
        <taxon>Enterobacteriaceae</taxon>
        <taxon>Shigella</taxon>
    </lineage>
</organism>
<evidence type="ECO:0000255" key="1">
    <source>
        <dbReference type="HAMAP-Rule" id="MF_01585"/>
    </source>
</evidence>
<evidence type="ECO:0000305" key="2"/>
<dbReference type="EMBL" id="AE005674">
    <property type="protein sequence ID" value="AAN44331.1"/>
    <property type="molecule type" value="Genomic_DNA"/>
</dbReference>
<dbReference type="EMBL" id="AE014073">
    <property type="protein sequence ID" value="AAP18157.1"/>
    <property type="molecule type" value="Genomic_DNA"/>
</dbReference>
<dbReference type="RefSeq" id="WP_000004638.1">
    <property type="nucleotide sequence ID" value="NZ_WPGW01000008.1"/>
</dbReference>
<dbReference type="SMR" id="Q83QB9"/>
<dbReference type="STRING" id="198214.SF2845"/>
<dbReference type="PaxDb" id="198214-SF2845"/>
<dbReference type="KEGG" id="sfl:SF2845"/>
<dbReference type="KEGG" id="sfx:S3043"/>
<dbReference type="PATRIC" id="fig|198214.7.peg.3385"/>
<dbReference type="HOGENOM" id="CLU_047399_0_0_6"/>
<dbReference type="Proteomes" id="UP000001006">
    <property type="component" value="Chromosome"/>
</dbReference>
<dbReference type="Proteomes" id="UP000002673">
    <property type="component" value="Chromosome"/>
</dbReference>
<dbReference type="GO" id="GO:0005886">
    <property type="term" value="C:plasma membrane"/>
    <property type="evidence" value="ECO:0007669"/>
    <property type="project" value="UniProtKB-SubCell"/>
</dbReference>
<dbReference type="GO" id="GO:0051978">
    <property type="term" value="F:lysophospholipid:sodium symporter activity"/>
    <property type="evidence" value="ECO:0007669"/>
    <property type="project" value="InterPro"/>
</dbReference>
<dbReference type="CDD" id="cd06173">
    <property type="entry name" value="MFS_MefA_like"/>
    <property type="match status" value="1"/>
</dbReference>
<dbReference type="FunFam" id="1.20.1250.20:FF:000091">
    <property type="entry name" value="Lysophospholipid transporter LplT"/>
    <property type="match status" value="1"/>
</dbReference>
<dbReference type="Gene3D" id="1.20.1250.20">
    <property type="entry name" value="MFS general substrate transporter like domains"/>
    <property type="match status" value="1"/>
</dbReference>
<dbReference type="HAMAP" id="MF_01585">
    <property type="entry name" value="MFS_LplT"/>
    <property type="match status" value="1"/>
</dbReference>
<dbReference type="InterPro" id="IPR023727">
    <property type="entry name" value="LysoPLipid__transptr_LplT"/>
</dbReference>
<dbReference type="InterPro" id="IPR011701">
    <property type="entry name" value="MFS"/>
</dbReference>
<dbReference type="InterPro" id="IPR036259">
    <property type="entry name" value="MFS_trans_sf"/>
</dbReference>
<dbReference type="NCBIfam" id="NF008397">
    <property type="entry name" value="PRK11195.1"/>
    <property type="match status" value="1"/>
</dbReference>
<dbReference type="PANTHER" id="PTHR43266">
    <property type="entry name" value="MACROLIDE-EFFLUX PROTEIN"/>
    <property type="match status" value="1"/>
</dbReference>
<dbReference type="PANTHER" id="PTHR43266:SF2">
    <property type="entry name" value="MAJOR FACILITATOR SUPERFAMILY (MFS) PROFILE DOMAIN-CONTAINING PROTEIN"/>
    <property type="match status" value="1"/>
</dbReference>
<dbReference type="Pfam" id="PF07690">
    <property type="entry name" value="MFS_1"/>
    <property type="match status" value="1"/>
</dbReference>
<dbReference type="SUPFAM" id="SSF103473">
    <property type="entry name" value="MFS general substrate transporter"/>
    <property type="match status" value="1"/>
</dbReference>